<organism>
    <name type="scientific">Bos taurus</name>
    <name type="common">Bovine</name>
    <dbReference type="NCBI Taxonomy" id="9913"/>
    <lineage>
        <taxon>Eukaryota</taxon>
        <taxon>Metazoa</taxon>
        <taxon>Chordata</taxon>
        <taxon>Craniata</taxon>
        <taxon>Vertebrata</taxon>
        <taxon>Euteleostomi</taxon>
        <taxon>Mammalia</taxon>
        <taxon>Eutheria</taxon>
        <taxon>Laurasiatheria</taxon>
        <taxon>Artiodactyla</taxon>
        <taxon>Ruminantia</taxon>
        <taxon>Pecora</taxon>
        <taxon>Bovidae</taxon>
        <taxon>Bovinae</taxon>
        <taxon>Bos</taxon>
    </lineage>
</organism>
<gene>
    <name type="primary">MRPL14</name>
</gene>
<keyword id="KW-0496">Mitochondrion</keyword>
<keyword id="KW-1185">Reference proteome</keyword>
<keyword id="KW-0687">Ribonucleoprotein</keyword>
<keyword id="KW-0689">Ribosomal protein</keyword>
<keyword id="KW-0809">Transit peptide</keyword>
<reference key="1">
    <citation type="submission" date="2006-05" db="EMBL/GenBank/DDBJ databases">
        <authorList>
            <consortium name="NIH - Mammalian Gene Collection (MGC) project"/>
        </authorList>
    </citation>
    <scope>NUCLEOTIDE SEQUENCE [LARGE SCALE MRNA]</scope>
    <source>
        <strain>Hereford</strain>
        <tissue>Ascending colon</tissue>
    </source>
</reference>
<reference key="2">
    <citation type="journal article" date="2001" name="J. Biol. Chem.">
        <title>Structural compensation for the deficit of rRNA with proteins in the mammalian mitochondrial ribosome. Systematic analysis of protein components of the large ribosomal subunit from mammalian mitochondria.</title>
        <authorList>
            <person name="Suzuki T."/>
            <person name="Terasaki M."/>
            <person name="Takemoto-Hori C."/>
            <person name="Hanada T."/>
            <person name="Ueda T."/>
            <person name="Wada A."/>
            <person name="Watanabe K."/>
        </authorList>
    </citation>
    <scope>IDENTIFICATION BY MASS SPECTROMETRY</scope>
    <scope>SUBCELLULAR LOCATION</scope>
    <scope>SUBUNIT</scope>
</reference>
<feature type="transit peptide" description="Mitochondrion" evidence="1">
    <location>
        <begin position="1"/>
        <end position="30"/>
    </location>
</feature>
<feature type="chain" id="PRO_0000261133" description="Large ribosomal subunit protein uL14m">
    <location>
        <begin position="31"/>
        <end position="145"/>
    </location>
</feature>
<protein>
    <recommendedName>
        <fullName evidence="4">Large ribosomal subunit protein uL14m</fullName>
    </recommendedName>
    <alternativeName>
        <fullName>39S ribosomal protein L14, mitochondrial</fullName>
        <shortName>L14mt</shortName>
        <shortName>MRP-L14</shortName>
    </alternativeName>
</protein>
<accession>Q1JQ99</accession>
<sequence>MAFSSGLWGPCVHMSRAFSQRCFSTTGSLGAIQKMTRVRVVDNSALGNTPYHRPPRCIHVYNKNGVGKVGDRILLAIKGQKKKALIVGHRMPGPTMTPRFDSNNVVLIEDNGNPVGTRIKTPIPTSLRQREGEFSKVLAIAQNFV</sequence>
<comment type="function">
    <text evidence="2">May form part of 2 intersubunit bridges in the assembled ribosome. Upon binding to MALSU1, intersubunit bridge formation is blocked, preventing ribosome formation and repressing translation.</text>
</comment>
<comment type="subunit">
    <text evidence="2 3">Component of the mitochondrial ribosome large subunit (39S) which comprises a 16S rRNA and about 50 distinct proteins (PubMed:11279069). Interacts with MALSU1 (By similarity).</text>
</comment>
<comment type="subcellular location">
    <subcellularLocation>
        <location evidence="3">Mitochondrion</location>
    </subcellularLocation>
</comment>
<comment type="similarity">
    <text evidence="4">Belongs to the universal ribosomal protein uL14 family.</text>
</comment>
<name>RM14_BOVIN</name>
<dbReference type="EMBL" id="BC116124">
    <property type="protein sequence ID" value="AAI16125.1"/>
    <property type="molecule type" value="mRNA"/>
</dbReference>
<dbReference type="RefSeq" id="NP_001069805.1">
    <property type="nucleotide sequence ID" value="NM_001076337.2"/>
</dbReference>
<dbReference type="RefSeq" id="XP_024839485.1">
    <property type="nucleotide sequence ID" value="XM_024983717.2"/>
</dbReference>
<dbReference type="RefSeq" id="XP_024839486.1">
    <property type="nucleotide sequence ID" value="XM_024983718.2"/>
</dbReference>
<dbReference type="RefSeq" id="XP_024839487.1">
    <property type="nucleotide sequence ID" value="XM_024983719.2"/>
</dbReference>
<dbReference type="RefSeq" id="XP_024839488.1">
    <property type="nucleotide sequence ID" value="XM_024983720.2"/>
</dbReference>
<dbReference type="RefSeq" id="XP_024839489.1">
    <property type="nucleotide sequence ID" value="XM_024983721.2"/>
</dbReference>
<dbReference type="RefSeq" id="XP_059736411.1">
    <property type="nucleotide sequence ID" value="XM_059880428.1"/>
</dbReference>
<dbReference type="SMR" id="Q1JQ99"/>
<dbReference type="FunCoup" id="Q1JQ99">
    <property type="interactions" value="518"/>
</dbReference>
<dbReference type="PaxDb" id="9913-ENSBTAP00000015619"/>
<dbReference type="GeneID" id="614579"/>
<dbReference type="KEGG" id="bta:614579"/>
<dbReference type="CTD" id="64928"/>
<dbReference type="eggNOG" id="KOG3441">
    <property type="taxonomic scope" value="Eukaryota"/>
</dbReference>
<dbReference type="HOGENOM" id="CLU_128925_1_0_1"/>
<dbReference type="InParanoid" id="Q1JQ99"/>
<dbReference type="OrthoDB" id="274765at2759"/>
<dbReference type="TreeFam" id="TF324586"/>
<dbReference type="Proteomes" id="UP000009136">
    <property type="component" value="Unplaced"/>
</dbReference>
<dbReference type="GO" id="GO:0005743">
    <property type="term" value="C:mitochondrial inner membrane"/>
    <property type="evidence" value="ECO:0000304"/>
    <property type="project" value="Reactome"/>
</dbReference>
<dbReference type="GO" id="GO:0005762">
    <property type="term" value="C:mitochondrial large ribosomal subunit"/>
    <property type="evidence" value="ECO:0000250"/>
    <property type="project" value="UniProtKB"/>
</dbReference>
<dbReference type="GO" id="GO:0005739">
    <property type="term" value="C:mitochondrion"/>
    <property type="evidence" value="ECO:0000318"/>
    <property type="project" value="GO_Central"/>
</dbReference>
<dbReference type="GO" id="GO:0003735">
    <property type="term" value="F:structural constituent of ribosome"/>
    <property type="evidence" value="ECO:0007669"/>
    <property type="project" value="InterPro"/>
</dbReference>
<dbReference type="GO" id="GO:0006412">
    <property type="term" value="P:translation"/>
    <property type="evidence" value="ECO:0007669"/>
    <property type="project" value="InterPro"/>
</dbReference>
<dbReference type="CDD" id="cd00337">
    <property type="entry name" value="Ribosomal_uL14"/>
    <property type="match status" value="1"/>
</dbReference>
<dbReference type="FunFam" id="2.40.150.20:FF:000004">
    <property type="entry name" value="39S ribosomal protein L14, mitochondrial"/>
    <property type="match status" value="1"/>
</dbReference>
<dbReference type="Gene3D" id="2.40.150.20">
    <property type="entry name" value="Ribosomal protein L14"/>
    <property type="match status" value="1"/>
</dbReference>
<dbReference type="HAMAP" id="MF_01367">
    <property type="entry name" value="Ribosomal_uL14"/>
    <property type="match status" value="1"/>
</dbReference>
<dbReference type="InterPro" id="IPR000218">
    <property type="entry name" value="Ribosomal_uL14"/>
</dbReference>
<dbReference type="InterPro" id="IPR036853">
    <property type="entry name" value="Ribosomal_uL14_sf"/>
</dbReference>
<dbReference type="PANTHER" id="PTHR21037">
    <property type="entry name" value="39S RIBOSOMAL PROTEIN L14, MITOCHONDRIAL"/>
    <property type="match status" value="1"/>
</dbReference>
<dbReference type="PANTHER" id="PTHR21037:SF3">
    <property type="entry name" value="LARGE RIBOSOMAL SUBUNIT PROTEIN UL14M"/>
    <property type="match status" value="1"/>
</dbReference>
<dbReference type="Pfam" id="PF00238">
    <property type="entry name" value="Ribosomal_L14"/>
    <property type="match status" value="1"/>
</dbReference>
<dbReference type="SMART" id="SM01374">
    <property type="entry name" value="Ribosomal_L14"/>
    <property type="match status" value="1"/>
</dbReference>
<dbReference type="SUPFAM" id="SSF50193">
    <property type="entry name" value="Ribosomal protein L14"/>
    <property type="match status" value="1"/>
</dbReference>
<proteinExistence type="evidence at protein level"/>
<evidence type="ECO:0000250" key="1"/>
<evidence type="ECO:0000250" key="2">
    <source>
        <dbReference type="UniProtKB" id="Q6P1L8"/>
    </source>
</evidence>
<evidence type="ECO:0000269" key="3">
    <source>
    </source>
</evidence>
<evidence type="ECO:0000305" key="4"/>